<sequence>MGGSALNQGVLEGDDAPGQSLYERLSQRMLDISGDRGVLKDVIREGAGDLVAPDASVLVKYSGYLEHMDRPFDSNYFRKTPRLMKLGEDITLWGMELGLLSMRRGELARFLFKPNYAYGTLGCPPLIPPNTTVLFEIELLDFLDCAESDKFCALSAEQQDQFPLQKVLKVAATEREFGNYLFRQNRFYDAKVRYKRALLLLRRRSAPPEEQHLVEAAKLPVLLNLSFTYLKLDRPTIALCYGEQALIIDQKNAKALFRCGQACLLLTEYQKARDFLVRAQKEQPFNHDINNELKKLASCYRDYVDKEKEMWHRMFAPCGDGSTAGES</sequence>
<gene>
    <name type="primary">FKBP6</name>
    <name type="synonym">FKBP36</name>
</gene>
<dbReference type="EMBL" id="AF038847">
    <property type="protein sequence ID" value="AAC64249.1"/>
    <property type="molecule type" value="mRNA"/>
</dbReference>
<dbReference type="EMBL" id="AF447060">
    <property type="protein sequence ID" value="AAP97324.1"/>
    <property type="molecule type" value="mRNA"/>
</dbReference>
<dbReference type="EMBL" id="AK302121">
    <property type="protein sequence ID" value="BAG63499.1"/>
    <property type="molecule type" value="mRNA"/>
</dbReference>
<dbReference type="EMBL" id="BC036817">
    <property type="protein sequence ID" value="AAH36817.1"/>
    <property type="molecule type" value="mRNA"/>
</dbReference>
<dbReference type="EMBL" id="AC005049">
    <property type="status" value="NOT_ANNOTATED_CDS"/>
    <property type="molecule type" value="Genomic_DNA"/>
</dbReference>
<dbReference type="EMBL" id="AC073841">
    <property type="status" value="NOT_ANNOTATED_CDS"/>
    <property type="molecule type" value="Genomic_DNA"/>
</dbReference>
<dbReference type="EMBL" id="CH471200">
    <property type="protein sequence ID" value="EAW69684.1"/>
    <property type="molecule type" value="Genomic_DNA"/>
</dbReference>
<dbReference type="EMBL" id="CH471200">
    <property type="protein sequence ID" value="EAW69686.1"/>
    <property type="molecule type" value="Genomic_DNA"/>
</dbReference>
<dbReference type="CCDS" id="CCDS43595.1">
    <molecule id="O75344-1"/>
</dbReference>
<dbReference type="CCDS" id="CCDS47604.1">
    <molecule id="O75344-2"/>
</dbReference>
<dbReference type="CCDS" id="CCDS64670.1">
    <molecule id="O75344-3"/>
</dbReference>
<dbReference type="RefSeq" id="NP_001128683.1">
    <molecule id="O75344-2"/>
    <property type="nucleotide sequence ID" value="NM_001135211.3"/>
</dbReference>
<dbReference type="RefSeq" id="NP_001268233.1">
    <molecule id="O75344-3"/>
    <property type="nucleotide sequence ID" value="NM_001281304.2"/>
</dbReference>
<dbReference type="RefSeq" id="NP_003593.3">
    <molecule id="O75344-1"/>
    <property type="nucleotide sequence ID" value="NM_003602.4"/>
</dbReference>
<dbReference type="PDB" id="3B7X">
    <property type="method" value="X-ray"/>
    <property type="resolution" value="2.10 A"/>
    <property type="chains" value="A=12-144"/>
</dbReference>
<dbReference type="PDBsum" id="3B7X"/>
<dbReference type="SMR" id="O75344"/>
<dbReference type="BioGRID" id="114046">
    <property type="interactions" value="82"/>
</dbReference>
<dbReference type="FunCoup" id="O75344">
    <property type="interactions" value="90"/>
</dbReference>
<dbReference type="IntAct" id="O75344">
    <property type="interactions" value="94"/>
</dbReference>
<dbReference type="MINT" id="O75344"/>
<dbReference type="STRING" id="9606.ENSP00000252037"/>
<dbReference type="iPTMnet" id="O75344"/>
<dbReference type="PhosphoSitePlus" id="O75344"/>
<dbReference type="BioMuta" id="FKBP6"/>
<dbReference type="MassIVE" id="O75344"/>
<dbReference type="PaxDb" id="9606-ENSP00000252037"/>
<dbReference type="PeptideAtlas" id="O75344"/>
<dbReference type="ProteomicsDB" id="32205"/>
<dbReference type="ProteomicsDB" id="49912">
    <molecule id="O75344-1"/>
</dbReference>
<dbReference type="ProteomicsDB" id="49913">
    <molecule id="O75344-2"/>
</dbReference>
<dbReference type="Antibodypedia" id="7933">
    <property type="antibodies" value="278 antibodies from 29 providers"/>
</dbReference>
<dbReference type="DNASU" id="8468"/>
<dbReference type="Ensembl" id="ENST00000252037.5">
    <molecule id="O75344-1"/>
    <property type="protein sequence ID" value="ENSP00000252037.4"/>
    <property type="gene ID" value="ENSG00000077800.13"/>
</dbReference>
<dbReference type="Ensembl" id="ENST00000413573.6">
    <molecule id="O75344-3"/>
    <property type="protein sequence ID" value="ENSP00000394952.2"/>
    <property type="gene ID" value="ENSG00000077800.13"/>
</dbReference>
<dbReference type="Ensembl" id="ENST00000431982.6">
    <molecule id="O75344-2"/>
    <property type="protein sequence ID" value="ENSP00000416277.2"/>
    <property type="gene ID" value="ENSG00000077800.13"/>
</dbReference>
<dbReference type="GeneID" id="8468"/>
<dbReference type="KEGG" id="hsa:8468"/>
<dbReference type="MANE-Select" id="ENST00000252037.5">
    <property type="protein sequence ID" value="ENSP00000252037.4"/>
    <property type="RefSeq nucleotide sequence ID" value="NM_003602.5"/>
    <property type="RefSeq protein sequence ID" value="NP_003593.3"/>
</dbReference>
<dbReference type="UCSC" id="uc003tya.4">
    <molecule id="O75344-1"/>
    <property type="organism name" value="human"/>
</dbReference>
<dbReference type="AGR" id="HGNC:3722"/>
<dbReference type="CTD" id="8468"/>
<dbReference type="DisGeNET" id="8468"/>
<dbReference type="GeneCards" id="FKBP6"/>
<dbReference type="HGNC" id="HGNC:3722">
    <property type="gene designation" value="FKBP6"/>
</dbReference>
<dbReference type="HPA" id="ENSG00000077800">
    <property type="expression patterns" value="Tissue enriched (testis)"/>
</dbReference>
<dbReference type="MalaCards" id="FKBP6"/>
<dbReference type="MIM" id="604839">
    <property type="type" value="gene"/>
</dbReference>
<dbReference type="MIM" id="620103">
    <property type="type" value="phenotype"/>
</dbReference>
<dbReference type="neXtProt" id="NX_O75344"/>
<dbReference type="OpenTargets" id="ENSG00000077800"/>
<dbReference type="Orphanet" id="904">
    <property type="disease" value="Williams syndrome"/>
</dbReference>
<dbReference type="PharmGKB" id="PA28163"/>
<dbReference type="VEuPathDB" id="HostDB:ENSG00000077800"/>
<dbReference type="eggNOG" id="KOG0543">
    <property type="taxonomic scope" value="Eukaryota"/>
</dbReference>
<dbReference type="GeneTree" id="ENSGT00940000158514"/>
<dbReference type="InParanoid" id="O75344"/>
<dbReference type="OMA" id="CHRMFTP"/>
<dbReference type="OrthoDB" id="8116123at2759"/>
<dbReference type="PAN-GO" id="O75344">
    <property type="GO annotations" value="4 GO annotations based on evolutionary models"/>
</dbReference>
<dbReference type="PhylomeDB" id="O75344"/>
<dbReference type="TreeFam" id="TF354214"/>
<dbReference type="PathwayCommons" id="O75344"/>
<dbReference type="Reactome" id="R-HSA-1221632">
    <property type="pathway name" value="Meiotic synapsis"/>
</dbReference>
<dbReference type="Reactome" id="R-HSA-5601884">
    <property type="pathway name" value="PIWI-interacting RNA (piRNA) biogenesis"/>
</dbReference>
<dbReference type="SignaLink" id="O75344"/>
<dbReference type="BioGRID-ORCS" id="8468">
    <property type="hits" value="15 hits in 1145 CRISPR screens"/>
</dbReference>
<dbReference type="EvolutionaryTrace" id="O75344"/>
<dbReference type="GenomeRNAi" id="8468"/>
<dbReference type="Pharos" id="O75344">
    <property type="development level" value="Tbio"/>
</dbReference>
<dbReference type="PRO" id="PR:O75344"/>
<dbReference type="Proteomes" id="UP000005640">
    <property type="component" value="Chromosome 7"/>
</dbReference>
<dbReference type="RNAct" id="O75344">
    <property type="molecule type" value="protein"/>
</dbReference>
<dbReference type="Bgee" id="ENSG00000077800">
    <property type="expression patterns" value="Expressed in left testis and 135 other cell types or tissues"/>
</dbReference>
<dbReference type="ExpressionAtlas" id="O75344">
    <property type="expression patterns" value="baseline and differential"/>
</dbReference>
<dbReference type="GO" id="GO:0005737">
    <property type="term" value="C:cytoplasm"/>
    <property type="evidence" value="ECO:0000250"/>
    <property type="project" value="UniProtKB"/>
</dbReference>
<dbReference type="GO" id="GO:0005829">
    <property type="term" value="C:cytosol"/>
    <property type="evidence" value="ECO:0000314"/>
    <property type="project" value="HPA"/>
</dbReference>
<dbReference type="GO" id="GO:0001650">
    <property type="term" value="C:fibrillar center"/>
    <property type="evidence" value="ECO:0000314"/>
    <property type="project" value="HPA"/>
</dbReference>
<dbReference type="GO" id="GO:0045171">
    <property type="term" value="C:intercellular bridge"/>
    <property type="evidence" value="ECO:0000314"/>
    <property type="project" value="HPA"/>
</dbReference>
<dbReference type="GO" id="GO:0015630">
    <property type="term" value="C:microtubule cytoskeleton"/>
    <property type="evidence" value="ECO:0000314"/>
    <property type="project" value="HPA"/>
</dbReference>
<dbReference type="GO" id="GO:0000795">
    <property type="term" value="C:synaptonemal complex"/>
    <property type="evidence" value="ECO:0000250"/>
    <property type="project" value="UniProtKB"/>
</dbReference>
<dbReference type="GO" id="GO:0005528">
    <property type="term" value="F:FK506 binding"/>
    <property type="evidence" value="ECO:0000304"/>
    <property type="project" value="ProtInc"/>
</dbReference>
<dbReference type="GO" id="GO:0051879">
    <property type="term" value="F:Hsp90 protein binding"/>
    <property type="evidence" value="ECO:0000250"/>
    <property type="project" value="UniProtKB"/>
</dbReference>
<dbReference type="GO" id="GO:0042802">
    <property type="term" value="F:identical protein binding"/>
    <property type="evidence" value="ECO:0000353"/>
    <property type="project" value="IntAct"/>
</dbReference>
<dbReference type="GO" id="GO:0030154">
    <property type="term" value="P:cell differentiation"/>
    <property type="evidence" value="ECO:0007669"/>
    <property type="project" value="UniProtKB-KW"/>
</dbReference>
<dbReference type="GO" id="GO:0051321">
    <property type="term" value="P:meiotic cell cycle"/>
    <property type="evidence" value="ECO:0000250"/>
    <property type="project" value="UniProtKB"/>
</dbReference>
<dbReference type="GO" id="GO:0034587">
    <property type="term" value="P:piRNA processing"/>
    <property type="evidence" value="ECO:0000250"/>
    <property type="project" value="UniProtKB"/>
</dbReference>
<dbReference type="GO" id="GO:0045070">
    <property type="term" value="P:positive regulation of viral genome replication"/>
    <property type="evidence" value="ECO:0000315"/>
    <property type="project" value="AgBase"/>
</dbReference>
<dbReference type="GO" id="GO:0006457">
    <property type="term" value="P:protein folding"/>
    <property type="evidence" value="ECO:0000250"/>
    <property type="project" value="UniProtKB"/>
</dbReference>
<dbReference type="GO" id="GO:0031047">
    <property type="term" value="P:regulatory ncRNA-mediated gene silencing"/>
    <property type="evidence" value="ECO:0000250"/>
    <property type="project" value="UniProtKB"/>
</dbReference>
<dbReference type="GO" id="GO:0007283">
    <property type="term" value="P:spermatogenesis"/>
    <property type="evidence" value="ECO:0000250"/>
    <property type="project" value="UniProtKB"/>
</dbReference>
<dbReference type="GO" id="GO:0141196">
    <property type="term" value="P:transposable element silencing by piRNA-mediated DNA methylation"/>
    <property type="evidence" value="ECO:0000250"/>
    <property type="project" value="UniProtKB"/>
</dbReference>
<dbReference type="FunFam" id="1.25.40.10:FF:000160">
    <property type="entry name" value="Peptidylprolyl isomerase"/>
    <property type="match status" value="1"/>
</dbReference>
<dbReference type="FunFam" id="3.10.50.40:FF:000030">
    <property type="entry name" value="Peptidylprolyl isomerase"/>
    <property type="match status" value="1"/>
</dbReference>
<dbReference type="Gene3D" id="3.10.50.40">
    <property type="match status" value="1"/>
</dbReference>
<dbReference type="Gene3D" id="1.25.40.10">
    <property type="entry name" value="Tetratricopeptide repeat domain"/>
    <property type="match status" value="1"/>
</dbReference>
<dbReference type="InterPro" id="IPR042282">
    <property type="entry name" value="FKBP6/shu"/>
</dbReference>
<dbReference type="InterPro" id="IPR046357">
    <property type="entry name" value="PPIase_dom_sf"/>
</dbReference>
<dbReference type="InterPro" id="IPR001179">
    <property type="entry name" value="PPIase_FKBP_dom"/>
</dbReference>
<dbReference type="InterPro" id="IPR011990">
    <property type="entry name" value="TPR-like_helical_dom_sf"/>
</dbReference>
<dbReference type="InterPro" id="IPR019734">
    <property type="entry name" value="TPR_rpt"/>
</dbReference>
<dbReference type="PANTHER" id="PTHR46674">
    <property type="entry name" value="INACTIVE PEPTIDYL-PROLYL CIS-TRANS ISOMERASE FKBP6"/>
    <property type="match status" value="1"/>
</dbReference>
<dbReference type="PANTHER" id="PTHR46674:SF1">
    <property type="entry name" value="INACTIVE PEPTIDYL-PROLYL CIS-TRANS ISOMERASE FKBP6"/>
    <property type="match status" value="1"/>
</dbReference>
<dbReference type="Pfam" id="PF00254">
    <property type="entry name" value="FKBP_C"/>
    <property type="match status" value="1"/>
</dbReference>
<dbReference type="SMART" id="SM00028">
    <property type="entry name" value="TPR"/>
    <property type="match status" value="3"/>
</dbReference>
<dbReference type="SUPFAM" id="SSF54534">
    <property type="entry name" value="FKBP-like"/>
    <property type="match status" value="1"/>
</dbReference>
<dbReference type="SUPFAM" id="SSF48452">
    <property type="entry name" value="TPR-like"/>
    <property type="match status" value="1"/>
</dbReference>
<dbReference type="PROSITE" id="PS50059">
    <property type="entry name" value="FKBP_PPIASE"/>
    <property type="match status" value="1"/>
</dbReference>
<dbReference type="PROSITE" id="PS50293">
    <property type="entry name" value="TPR_REGION"/>
    <property type="match status" value="1"/>
</dbReference>
<name>FKBP6_HUMAN</name>
<evidence type="ECO:0000250" key="1"/>
<evidence type="ECO:0000250" key="2">
    <source>
        <dbReference type="UniProtKB" id="Q91XW8"/>
    </source>
</evidence>
<evidence type="ECO:0000255" key="3">
    <source>
        <dbReference type="PROSITE-ProRule" id="PRU00277"/>
    </source>
</evidence>
<evidence type="ECO:0000269" key="4">
    <source>
    </source>
</evidence>
<evidence type="ECO:0000269" key="5">
    <source>
    </source>
</evidence>
<evidence type="ECO:0000269" key="6">
    <source>
    </source>
</evidence>
<evidence type="ECO:0000269" key="7">
    <source>
    </source>
</evidence>
<evidence type="ECO:0000269" key="8">
    <source>
    </source>
</evidence>
<evidence type="ECO:0000269" key="9">
    <source>
    </source>
</evidence>
<evidence type="ECO:0000269" key="10">
    <source>
    </source>
</evidence>
<evidence type="ECO:0000303" key="11">
    <source>
    </source>
</evidence>
<evidence type="ECO:0000303" key="12">
    <source ref="2"/>
</evidence>
<evidence type="ECO:0000305" key="13"/>
<evidence type="ECO:0007829" key="14">
    <source>
        <dbReference type="PDB" id="3B7X"/>
    </source>
</evidence>
<reference key="1">
    <citation type="journal article" date="1998" name="Genomics">
        <title>A novel human gene FKBP6 is deleted in Williams syndrome.</title>
        <authorList>
            <person name="Meng X."/>
            <person name="Lu X."/>
            <person name="Morris C.A."/>
            <person name="Keating M.T."/>
        </authorList>
    </citation>
    <scope>NUCLEOTIDE SEQUENCE [MRNA] (ISOFORM 1)</scope>
    <source>
        <tissue>Testis</tissue>
    </source>
</reference>
<reference key="2">
    <citation type="submission" date="2001-11" db="EMBL/GenBank/DDBJ databases">
        <authorList>
            <person name="Zan Q."/>
            <person name="Guo J.H."/>
            <person name="Yu L."/>
        </authorList>
    </citation>
    <scope>NUCLEOTIDE SEQUENCE [LARGE SCALE MRNA] (ISOFORM 3)</scope>
</reference>
<reference key="3">
    <citation type="journal article" date="2004" name="Nat. Genet.">
        <title>Complete sequencing and characterization of 21,243 full-length human cDNAs.</title>
        <authorList>
            <person name="Ota T."/>
            <person name="Suzuki Y."/>
            <person name="Nishikawa T."/>
            <person name="Otsuki T."/>
            <person name="Sugiyama T."/>
            <person name="Irie R."/>
            <person name="Wakamatsu A."/>
            <person name="Hayashi K."/>
            <person name="Sato H."/>
            <person name="Nagai K."/>
            <person name="Kimura K."/>
            <person name="Makita H."/>
            <person name="Sekine M."/>
            <person name="Obayashi M."/>
            <person name="Nishi T."/>
            <person name="Shibahara T."/>
            <person name="Tanaka T."/>
            <person name="Ishii S."/>
            <person name="Yamamoto J."/>
            <person name="Saito K."/>
            <person name="Kawai Y."/>
            <person name="Isono Y."/>
            <person name="Nakamura Y."/>
            <person name="Nagahari K."/>
            <person name="Murakami K."/>
            <person name="Yasuda T."/>
            <person name="Iwayanagi T."/>
            <person name="Wagatsuma M."/>
            <person name="Shiratori A."/>
            <person name="Sudo H."/>
            <person name="Hosoiri T."/>
            <person name="Kaku Y."/>
            <person name="Kodaira H."/>
            <person name="Kondo H."/>
            <person name="Sugawara M."/>
            <person name="Takahashi M."/>
            <person name="Kanda K."/>
            <person name="Yokoi T."/>
            <person name="Furuya T."/>
            <person name="Kikkawa E."/>
            <person name="Omura Y."/>
            <person name="Abe K."/>
            <person name="Kamihara K."/>
            <person name="Katsuta N."/>
            <person name="Sato K."/>
            <person name="Tanikawa M."/>
            <person name="Yamazaki M."/>
            <person name="Ninomiya K."/>
            <person name="Ishibashi T."/>
            <person name="Yamashita H."/>
            <person name="Murakawa K."/>
            <person name="Fujimori K."/>
            <person name="Tanai H."/>
            <person name="Kimata M."/>
            <person name="Watanabe M."/>
            <person name="Hiraoka S."/>
            <person name="Chiba Y."/>
            <person name="Ishida S."/>
            <person name="Ono Y."/>
            <person name="Takiguchi S."/>
            <person name="Watanabe S."/>
            <person name="Yosida M."/>
            <person name="Hotuta T."/>
            <person name="Kusano J."/>
            <person name="Kanehori K."/>
            <person name="Takahashi-Fujii A."/>
            <person name="Hara H."/>
            <person name="Tanase T.-O."/>
            <person name="Nomura Y."/>
            <person name="Togiya S."/>
            <person name="Komai F."/>
            <person name="Hara R."/>
            <person name="Takeuchi K."/>
            <person name="Arita M."/>
            <person name="Imose N."/>
            <person name="Musashino K."/>
            <person name="Yuuki H."/>
            <person name="Oshima A."/>
            <person name="Sasaki N."/>
            <person name="Aotsuka S."/>
            <person name="Yoshikawa Y."/>
            <person name="Matsunawa H."/>
            <person name="Ichihara T."/>
            <person name="Shiohata N."/>
            <person name="Sano S."/>
            <person name="Moriya S."/>
            <person name="Momiyama H."/>
            <person name="Satoh N."/>
            <person name="Takami S."/>
            <person name="Terashima Y."/>
            <person name="Suzuki O."/>
            <person name="Nakagawa S."/>
            <person name="Senoh A."/>
            <person name="Mizoguchi H."/>
            <person name="Goto Y."/>
            <person name="Shimizu F."/>
            <person name="Wakebe H."/>
            <person name="Hishigaki H."/>
            <person name="Watanabe T."/>
            <person name="Sugiyama A."/>
            <person name="Takemoto M."/>
            <person name="Kawakami B."/>
            <person name="Yamazaki M."/>
            <person name="Watanabe K."/>
            <person name="Kumagai A."/>
            <person name="Itakura S."/>
            <person name="Fukuzumi Y."/>
            <person name="Fujimori Y."/>
            <person name="Komiyama M."/>
            <person name="Tashiro H."/>
            <person name="Tanigami A."/>
            <person name="Fujiwara T."/>
            <person name="Ono T."/>
            <person name="Yamada K."/>
            <person name="Fujii Y."/>
            <person name="Ozaki K."/>
            <person name="Hirao M."/>
            <person name="Ohmori Y."/>
            <person name="Kawabata A."/>
            <person name="Hikiji T."/>
            <person name="Kobatake N."/>
            <person name="Inagaki H."/>
            <person name="Ikema Y."/>
            <person name="Okamoto S."/>
            <person name="Okitani R."/>
            <person name="Kawakami T."/>
            <person name="Noguchi S."/>
            <person name="Itoh T."/>
            <person name="Shigeta K."/>
            <person name="Senba T."/>
            <person name="Matsumura K."/>
            <person name="Nakajima Y."/>
            <person name="Mizuno T."/>
            <person name="Morinaga M."/>
            <person name="Sasaki M."/>
            <person name="Togashi T."/>
            <person name="Oyama M."/>
            <person name="Hata H."/>
            <person name="Watanabe M."/>
            <person name="Komatsu T."/>
            <person name="Mizushima-Sugano J."/>
            <person name="Satoh T."/>
            <person name="Shirai Y."/>
            <person name="Takahashi Y."/>
            <person name="Nakagawa K."/>
            <person name="Okumura K."/>
            <person name="Nagase T."/>
            <person name="Nomura N."/>
            <person name="Kikuchi H."/>
            <person name="Masuho Y."/>
            <person name="Yamashita R."/>
            <person name="Nakai K."/>
            <person name="Yada T."/>
            <person name="Nakamura Y."/>
            <person name="Ohara O."/>
            <person name="Isogai T."/>
            <person name="Sugano S."/>
        </authorList>
    </citation>
    <scope>NUCLEOTIDE SEQUENCE [LARGE SCALE MRNA] (ISOFORM 2)</scope>
    <source>
        <tissue>Testis</tissue>
    </source>
</reference>
<reference key="4">
    <citation type="journal article" date="2003" name="Nature">
        <title>The DNA sequence of human chromosome 7.</title>
        <authorList>
            <person name="Hillier L.W."/>
            <person name="Fulton R.S."/>
            <person name="Fulton L.A."/>
            <person name="Graves T.A."/>
            <person name="Pepin K.H."/>
            <person name="Wagner-McPherson C."/>
            <person name="Layman D."/>
            <person name="Maas J."/>
            <person name="Jaeger S."/>
            <person name="Walker R."/>
            <person name="Wylie K."/>
            <person name="Sekhon M."/>
            <person name="Becker M.C."/>
            <person name="O'Laughlin M.D."/>
            <person name="Schaller M.E."/>
            <person name="Fewell G.A."/>
            <person name="Delehaunty K.D."/>
            <person name="Miner T.L."/>
            <person name="Nash W.E."/>
            <person name="Cordes M."/>
            <person name="Du H."/>
            <person name="Sun H."/>
            <person name="Edwards J."/>
            <person name="Bradshaw-Cordum H."/>
            <person name="Ali J."/>
            <person name="Andrews S."/>
            <person name="Isak A."/>
            <person name="Vanbrunt A."/>
            <person name="Nguyen C."/>
            <person name="Du F."/>
            <person name="Lamar B."/>
            <person name="Courtney L."/>
            <person name="Kalicki J."/>
            <person name="Ozersky P."/>
            <person name="Bielicki L."/>
            <person name="Scott K."/>
            <person name="Holmes A."/>
            <person name="Harkins R."/>
            <person name="Harris A."/>
            <person name="Strong C.M."/>
            <person name="Hou S."/>
            <person name="Tomlinson C."/>
            <person name="Dauphin-Kohlberg S."/>
            <person name="Kozlowicz-Reilly A."/>
            <person name="Leonard S."/>
            <person name="Rohlfing T."/>
            <person name="Rock S.M."/>
            <person name="Tin-Wollam A.-M."/>
            <person name="Abbott A."/>
            <person name="Minx P."/>
            <person name="Maupin R."/>
            <person name="Strowmatt C."/>
            <person name="Latreille P."/>
            <person name="Miller N."/>
            <person name="Johnson D."/>
            <person name="Murray J."/>
            <person name="Woessner J.P."/>
            <person name="Wendl M.C."/>
            <person name="Yang S.-P."/>
            <person name="Schultz B.R."/>
            <person name="Wallis J.W."/>
            <person name="Spieth J."/>
            <person name="Bieri T.A."/>
            <person name="Nelson J.O."/>
            <person name="Berkowicz N."/>
            <person name="Wohldmann P.E."/>
            <person name="Cook L.L."/>
            <person name="Hickenbotham M.T."/>
            <person name="Eldred J."/>
            <person name="Williams D."/>
            <person name="Bedell J.A."/>
            <person name="Mardis E.R."/>
            <person name="Clifton S.W."/>
            <person name="Chissoe S.L."/>
            <person name="Marra M.A."/>
            <person name="Raymond C."/>
            <person name="Haugen E."/>
            <person name="Gillett W."/>
            <person name="Zhou Y."/>
            <person name="James R."/>
            <person name="Phelps K."/>
            <person name="Iadanoto S."/>
            <person name="Bubb K."/>
            <person name="Simms E."/>
            <person name="Levy R."/>
            <person name="Clendenning J."/>
            <person name="Kaul R."/>
            <person name="Kent W.J."/>
            <person name="Furey T.S."/>
            <person name="Baertsch R.A."/>
            <person name="Brent M.R."/>
            <person name="Keibler E."/>
            <person name="Flicek P."/>
            <person name="Bork P."/>
            <person name="Suyama M."/>
            <person name="Bailey J.A."/>
            <person name="Portnoy M.E."/>
            <person name="Torrents D."/>
            <person name="Chinwalla A.T."/>
            <person name="Gish W.R."/>
            <person name="Eddy S.R."/>
            <person name="McPherson J.D."/>
            <person name="Olson M.V."/>
            <person name="Eichler E.E."/>
            <person name="Green E.D."/>
            <person name="Waterston R.H."/>
            <person name="Wilson R.K."/>
        </authorList>
    </citation>
    <scope>NUCLEOTIDE SEQUENCE [LARGE SCALE GENOMIC DNA]</scope>
</reference>
<reference key="5">
    <citation type="submission" date="2005-09" db="EMBL/GenBank/DDBJ databases">
        <authorList>
            <person name="Mural R.J."/>
            <person name="Istrail S."/>
            <person name="Sutton G."/>
            <person name="Florea L."/>
            <person name="Halpern A.L."/>
            <person name="Mobarry C.M."/>
            <person name="Lippert R."/>
            <person name="Walenz B."/>
            <person name="Shatkay H."/>
            <person name="Dew I."/>
            <person name="Miller J.R."/>
            <person name="Flanigan M.J."/>
            <person name="Edwards N.J."/>
            <person name="Bolanos R."/>
            <person name="Fasulo D."/>
            <person name="Halldorsson B.V."/>
            <person name="Hannenhalli S."/>
            <person name="Turner R."/>
            <person name="Yooseph S."/>
            <person name="Lu F."/>
            <person name="Nusskern D.R."/>
            <person name="Shue B.C."/>
            <person name="Zheng X.H."/>
            <person name="Zhong F."/>
            <person name="Delcher A.L."/>
            <person name="Huson D.H."/>
            <person name="Kravitz S.A."/>
            <person name="Mouchard L."/>
            <person name="Reinert K."/>
            <person name="Remington K.A."/>
            <person name="Clark A.G."/>
            <person name="Waterman M.S."/>
            <person name="Eichler E.E."/>
            <person name="Adams M.D."/>
            <person name="Hunkapiller M.W."/>
            <person name="Myers E.W."/>
            <person name="Venter J.C."/>
        </authorList>
    </citation>
    <scope>NUCLEOTIDE SEQUENCE [LARGE SCALE GENOMIC DNA]</scope>
</reference>
<reference key="6">
    <citation type="journal article" date="2004" name="Genome Res.">
        <title>The status, quality, and expansion of the NIH full-length cDNA project: the Mammalian Gene Collection (MGC).</title>
        <authorList>
            <consortium name="The MGC Project Team"/>
        </authorList>
    </citation>
    <scope>NUCLEOTIDE SEQUENCE [LARGE SCALE MRNA] (ISOFORM 1)</scope>
    <source>
        <tissue>Brain</tissue>
    </source>
</reference>
<reference key="7">
    <citation type="journal article" date="2005" name="Clin. Dysmorphol.">
        <title>Autosomal dominant inheritance of Williams-Beuren syndrome in a father and son with haploinsufficiency for FKBP6.</title>
        <authorList>
            <person name="Metcalfe K."/>
            <person name="Simeonov E."/>
            <person name="Beckett W."/>
            <person name="Donnai D."/>
            <person name="Tassabehji M."/>
        </authorList>
    </citation>
    <scope>POSSIBLE INVOLVEMENT IN WBS</scope>
</reference>
<reference key="8">
    <citation type="journal article" date="2005" name="Mol. Hum. Reprod.">
        <title>Mutations in the chromosome pairing gene FKBP6 are not a common cause of non-obstructive azoospermia.</title>
        <authorList>
            <person name="Westerveld G.H."/>
            <person name="Repping S."/>
            <person name="Lombardi M.P."/>
            <person name="van der Veen F."/>
        </authorList>
    </citation>
    <scope>VARIANT CYS-183</scope>
</reference>
<reference key="9">
    <citation type="journal article" date="2007" name="Reproduction">
        <title>Mutation screening of the FKBP6 gene and its association study with spermatogenic impairment in idiopathic infertile men.</title>
        <authorList>
            <person name="Zhang W."/>
            <person name="Zhang S."/>
            <person name="Xiao C."/>
            <person name="Yang Y."/>
            <person name="Zhoucun A."/>
        </authorList>
    </citation>
    <scope>INVOLVEMENT IN SPGF77</scope>
</reference>
<reference key="10">
    <citation type="journal article" date="2008" name="Biochemistry">
        <title>FKBP36 forms complexes with clathrin and Hsp72 in spermatocytes.</title>
        <authorList>
            <person name="Jarczowski F."/>
            <person name="Fischer G."/>
            <person name="Edlich F."/>
        </authorList>
    </citation>
    <scope>INTERACTION WITH HSPA2 AND CLTC</scope>
</reference>
<reference key="11">
    <citation type="journal article" date="2009" name="J. Biol. Chem.">
        <title>FKBP36 is an inherent multifunctional glyceraldehyde-3-phosphate dehydrogenase inhibitor.</title>
        <authorList>
            <person name="Jarczowski F."/>
            <person name="Jahreis G."/>
            <person name="Erdmann F."/>
            <person name="Schierhorn A."/>
            <person name="Fischer G."/>
            <person name="Edlich F."/>
        </authorList>
    </citation>
    <scope>INTERACTION WITH GAPDH</scope>
</reference>
<reference key="12">
    <citation type="journal article" date="2022" name="Am. J. Hum. Genet.">
        <title>The piRNA-pathway factor FKBP6 is essential for spermatogenesis but dispensable for control of meiotic LINE-1 expression in humans.</title>
        <authorList>
            <consortium name="Genetics of Male Infertility Initiative (GEMINI) consortium"/>
            <person name="Wyrwoll M.J."/>
            <person name="Gaasbeek C.M."/>
            <person name="Golubickaite I."/>
            <person name="Stakaitis R."/>
            <person name="Oud M.S."/>
            <person name="Nagirnaja L."/>
            <person name="Dion C."/>
            <person name="Sindi E.B."/>
            <person name="Leitch H.G."/>
            <person name="Jayasena C.N."/>
            <person name="Sironen A."/>
            <person name="Dicke A.K."/>
            <person name="Rotte N."/>
            <person name="Stallmeyer B."/>
            <person name="Kliesch S."/>
            <person name="Grangeiro C.H.P."/>
            <person name="Araujo T.F."/>
            <person name="Lasko P."/>
            <person name="D'Hauwers K."/>
            <person name="Smits R.M."/>
            <person name="Ramos L."/>
            <person name="Xavier M.J."/>
            <person name="Conrad D.F."/>
            <person name="Almstrup K."/>
            <person name="Veltman J.A."/>
            <person name="Tuettelmann F."/>
            <person name="van der Heijden G.W."/>
        </authorList>
    </citation>
    <scope>VARIANTS SPGF77 204-ARG--SER-327 DEL AND 278-ARG--SER-327 DEL</scope>
    <scope>INVOLVEMENT IN SPGF77</scope>
    <scope>FUNCTION</scope>
    <scope>SUBCELLULAR LOCATION</scope>
</reference>
<keyword id="KW-0002">3D-structure</keyword>
<keyword id="KW-0025">Alternative splicing</keyword>
<keyword id="KW-0963">Cytoplasm</keyword>
<keyword id="KW-0221">Differentiation</keyword>
<keyword id="KW-0225">Disease variant</keyword>
<keyword id="KW-0469">Meiosis</keyword>
<keyword id="KW-0539">Nucleus</keyword>
<keyword id="KW-1267">Proteomics identification</keyword>
<keyword id="KW-1185">Reference proteome</keyword>
<keyword id="KW-0677">Repeat</keyword>
<keyword id="KW-0943">RNA-mediated gene silencing</keyword>
<keyword id="KW-0744">Spermatogenesis</keyword>
<keyword id="KW-0802">TPR repeat</keyword>
<keyword id="KW-0856">Williams-Beuren syndrome</keyword>
<comment type="function">
    <text evidence="2 9">Has an essential role in spermatogenesis (PubMed:36150389). It is required to repress transposable elements and prevent their mobilization, which is essential for the germline integrity (By similarity). Acts via the piRNA metabolic process, which mediates the repression of transposable elements during meiosis by forming complexes composed of piRNAs and Piwi proteins and govern the methylation and subsequent repression of transposons (By similarity). Acts as a co-chaperone via its interaction with HSP90 and is required for the piRNA amplification process, the secondary piRNA biogenesis (By similarity). May be required together with HSP90 in removal of 16 nucleotide ping-pong by-products from Piwi complexes, possibly facilitating turnover of Piwi complexes (By similarity).</text>
</comment>
<comment type="subunit">
    <text evidence="1 7 8">Interacts (via TPR repeats) with HSP90 (By similarity). Interacts with HSP72/HSPA2 and CLTC. Interacts with GAPDH; leading to inhibit GAPDH catalytic activity.</text>
</comment>
<comment type="interaction">
    <interactant intactId="EBI-744771">
        <id>O75344</id>
    </interactant>
    <interactant intactId="EBI-3905126">
        <id>P30838</id>
        <label>ALDH3A1</label>
    </interactant>
    <organismsDiffer>false</organismsDiffer>
    <experiments>3</experiments>
</comment>
<comment type="interaction">
    <interactant intactId="EBI-744771">
        <id>O75344</id>
    </interactant>
    <interactant intactId="EBI-12275524">
        <id>P23560-2</id>
        <label>BDNF</label>
    </interactant>
    <organismsDiffer>false</organismsDiffer>
    <experiments>3</experiments>
</comment>
<comment type="interaction">
    <interactant intactId="EBI-744771">
        <id>O75344</id>
    </interactant>
    <interactant intactId="EBI-740135">
        <id>P35520</id>
        <label>CBS</label>
    </interactant>
    <organismsDiffer>false</organismsDiffer>
    <experiments>3</experiments>
</comment>
<comment type="interaction">
    <interactant intactId="EBI-744771">
        <id>O75344</id>
    </interactant>
    <interactant intactId="EBI-11748295">
        <id>E9PSE9</id>
        <label>CCDC198</label>
    </interactant>
    <organismsDiffer>false</organismsDiffer>
    <experiments>3</experiments>
</comment>
<comment type="interaction">
    <interactant intactId="EBI-744771">
        <id>O75344</id>
    </interactant>
    <interactant intactId="EBI-718818">
        <id>Q96JB5</id>
        <label>CDK5RAP3</label>
    </interactant>
    <organismsDiffer>false</organismsDiffer>
    <experiments>12</experiments>
</comment>
<comment type="interaction">
    <interactant intactId="EBI-744771">
        <id>O75344</id>
    </interactant>
    <interactant intactId="EBI-9038570">
        <id>P27918</id>
        <label>CFP</label>
    </interactant>
    <organismsDiffer>false</organismsDiffer>
    <experiments>4</experiments>
</comment>
<comment type="interaction">
    <interactant intactId="EBI-744771">
        <id>O75344</id>
    </interactant>
    <interactant intactId="EBI-349854">
        <id>P13569</id>
        <label>CFTR</label>
    </interactant>
    <organismsDiffer>false</organismsDiffer>
    <experiments>4</experiments>
</comment>
<comment type="interaction">
    <interactant intactId="EBI-744771">
        <id>O75344</id>
    </interactant>
    <interactant intactId="EBI-739773">
        <id>Q9BSW2</id>
        <label>CRACR2A</label>
    </interactant>
    <organismsDiffer>false</organismsDiffer>
    <experiments>3</experiments>
</comment>
<comment type="interaction">
    <interactant intactId="EBI-744771">
        <id>O75344</id>
    </interactant>
    <interactant intactId="EBI-742054">
        <id>Q96D03</id>
        <label>DDIT4L</label>
    </interactant>
    <organismsDiffer>false</organismsDiffer>
    <experiments>3</experiments>
</comment>
<comment type="interaction">
    <interactant intactId="EBI-744771">
        <id>O75344</id>
    </interactant>
    <interactant intactId="EBI-12000556">
        <id>Q9Y2H0-1</id>
        <label>DLGAP4</label>
    </interactant>
    <organismsDiffer>false</organismsDiffer>
    <experiments>3</experiments>
</comment>
<comment type="interaction">
    <interactant intactId="EBI-744771">
        <id>O75344</id>
    </interactant>
    <interactant intactId="EBI-947964">
        <id>Q16610</id>
        <label>ECM1</label>
    </interactant>
    <organismsDiffer>false</organismsDiffer>
    <experiments>3</experiments>
</comment>
<comment type="interaction">
    <interactant intactId="EBI-744771">
        <id>O75344</id>
    </interactant>
    <interactant intactId="EBI-5280572">
        <id>P29692-2</id>
        <label>EEF1D</label>
    </interactant>
    <organismsDiffer>false</organismsDiffer>
    <experiments>3</experiments>
</comment>
<comment type="interaction">
    <interactant intactId="EBI-744771">
        <id>O75344</id>
    </interactant>
    <interactant intactId="EBI-744099">
        <id>Q9H0I2</id>
        <label>ENKD1</label>
    </interactant>
    <organismsDiffer>false</organismsDiffer>
    <experiments>3</experiments>
</comment>
<comment type="interaction">
    <interactant intactId="EBI-744771">
        <id>O75344</id>
    </interactant>
    <interactant intactId="EBI-744771">
        <id>O75344</id>
        <label>FKBP6</label>
    </interactant>
    <organismsDiffer>false</organismsDiffer>
    <experiments>7</experiments>
</comment>
<comment type="interaction">
    <interactant intactId="EBI-744771">
        <id>O75344</id>
    </interactant>
    <interactant intactId="EBI-724839">
        <id>Q14318</id>
        <label>FKBP8</label>
    </interactant>
    <organismsDiffer>false</organismsDiffer>
    <experiments>2</experiments>
</comment>
<comment type="interaction">
    <interactant intactId="EBI-744771">
        <id>O75344</id>
    </interactant>
    <interactant intactId="EBI-354056">
        <id>P04406</id>
        <label>GAPDH</label>
    </interactant>
    <organismsDiffer>false</organismsDiffer>
    <experiments>3</experiments>
</comment>
<comment type="interaction">
    <interactant intactId="EBI-744771">
        <id>O75344</id>
    </interactant>
    <interactant intactId="EBI-19954058">
        <id>O15499</id>
        <label>GSC2</label>
    </interactant>
    <organismsDiffer>false</organismsDiffer>
    <experiments>3</experiments>
</comment>
<comment type="interaction">
    <interactant intactId="EBI-744771">
        <id>O75344</id>
    </interactant>
    <interactant intactId="EBI-8638439">
        <id>Q8IYA8</id>
        <label>IHO1</label>
    </interactant>
    <organismsDiffer>false</organismsDiffer>
    <experiments>8</experiments>
</comment>
<comment type="interaction">
    <interactant intactId="EBI-744771">
        <id>O75344</id>
    </interactant>
    <interactant intactId="EBI-2556193">
        <id>Q63ZY3</id>
        <label>KANK2</label>
    </interactant>
    <organismsDiffer>false</organismsDiffer>
    <experiments>3</experiments>
</comment>
<comment type="interaction">
    <interactant intactId="EBI-744771">
        <id>O75344</id>
    </interactant>
    <interactant intactId="EBI-2949715">
        <id>O95678</id>
        <label>KRT75</label>
    </interactant>
    <organismsDiffer>false</organismsDiffer>
    <experiments>3</experiments>
</comment>
<comment type="interaction">
    <interactant intactId="EBI-744771">
        <id>O75344</id>
    </interactant>
    <interactant intactId="EBI-741037">
        <id>Q9BRK4</id>
        <label>LZTS2</label>
    </interactant>
    <organismsDiffer>false</organismsDiffer>
    <experiments>7</experiments>
</comment>
<comment type="interaction">
    <interactant intactId="EBI-744771">
        <id>O75344</id>
    </interactant>
    <interactant intactId="EBI-19944212">
        <id>A8MW99</id>
        <label>MEI4</label>
    </interactant>
    <organismsDiffer>false</organismsDiffer>
    <experiments>3</experiments>
</comment>
<comment type="interaction">
    <interactant intactId="EBI-744771">
        <id>O75344</id>
    </interactant>
    <interactant intactId="EBI-748397">
        <id>P50222</id>
        <label>MEOX2</label>
    </interactant>
    <organismsDiffer>false</organismsDiffer>
    <experiments>3</experiments>
</comment>
<comment type="interaction">
    <interactant intactId="EBI-744771">
        <id>O75344</id>
    </interactant>
    <interactant intactId="EBI-16439278">
        <id>Q6FHY5</id>
        <label>MEOX2</label>
    </interactant>
    <organismsDiffer>false</organismsDiffer>
    <experiments>3</experiments>
</comment>
<comment type="interaction">
    <interactant intactId="EBI-744771">
        <id>O75344</id>
    </interactant>
    <interactant intactId="EBI-744782">
        <id>Q9Y5B8</id>
        <label>NME7</label>
    </interactant>
    <organismsDiffer>false</organismsDiffer>
    <experiments>4</experiments>
</comment>
<comment type="interaction">
    <interactant intactId="EBI-744771">
        <id>O75344</id>
    </interactant>
    <interactant intactId="EBI-741158">
        <id>Q96HA8</id>
        <label>NTAQ1</label>
    </interactant>
    <organismsDiffer>false</organismsDiffer>
    <experiments>3</experiments>
</comment>
<comment type="interaction">
    <interactant intactId="EBI-744771">
        <id>O75344</id>
    </interactant>
    <interactant intactId="EBI-2681902">
        <id>P22059</id>
        <label>OSBP</label>
    </interactant>
    <organismsDiffer>false</organismsDiffer>
    <experiments>5</experiments>
</comment>
<comment type="interaction">
    <interactant intactId="EBI-744771">
        <id>O75344</id>
    </interactant>
    <interactant intactId="EBI-348567">
        <id>O75928-2</id>
        <label>PIAS2</label>
    </interactant>
    <organismsDiffer>false</organismsDiffer>
    <experiments>5</experiments>
</comment>
<comment type="interaction">
    <interactant intactId="EBI-744771">
        <id>O75344</id>
    </interactant>
    <interactant intactId="EBI-79165">
        <id>Q9NRD5</id>
        <label>PICK1</label>
    </interactant>
    <organismsDiffer>false</organismsDiffer>
    <experiments>3</experiments>
</comment>
<comment type="interaction">
    <interactant intactId="EBI-744771">
        <id>O75344</id>
    </interactant>
    <interactant intactId="EBI-1049676">
        <id>Q7L804</id>
        <label>RAB11FIP2</label>
    </interactant>
    <organismsDiffer>false</organismsDiffer>
    <experiments>3</experiments>
</comment>
<comment type="interaction">
    <interactant intactId="EBI-744771">
        <id>O75344</id>
    </interactant>
    <interactant intactId="EBI-2340927">
        <id>P78317</id>
        <label>RNF4</label>
    </interactant>
    <organismsDiffer>false</organismsDiffer>
    <experiments>3</experiments>
</comment>
<comment type="interaction">
    <interactant intactId="EBI-744771">
        <id>O75344</id>
    </interactant>
    <interactant intactId="EBI-12000762">
        <id>Q7Z5V6-2</id>
        <label>SAXO4</label>
    </interactant>
    <organismsDiffer>false</organismsDiffer>
    <experiments>6</experiments>
</comment>
<comment type="interaction">
    <interactant intactId="EBI-744771">
        <id>O75344</id>
    </interactant>
    <interactant intactId="EBI-357085">
        <id>Q9UNE7</id>
        <label>STUB1</label>
    </interactant>
    <organismsDiffer>false</organismsDiffer>
    <experiments>3</experiments>
</comment>
<comment type="interaction">
    <interactant intactId="EBI-744771">
        <id>O75344</id>
    </interactant>
    <interactant intactId="EBI-10175576">
        <id>G2XKQ0</id>
        <label>SUMO1P1</label>
    </interactant>
    <organismsDiffer>false</organismsDiffer>
    <experiments>6</experiments>
</comment>
<comment type="interaction">
    <interactant intactId="EBI-744771">
        <id>O75344</id>
    </interactant>
    <interactant intactId="EBI-11139477">
        <id>Q96N21</id>
        <label>TEPSIN</label>
    </interactant>
    <organismsDiffer>false</organismsDiffer>
    <experiments>3</experiments>
</comment>
<comment type="interaction">
    <interactant intactId="EBI-744771">
        <id>O75344</id>
    </interactant>
    <interactant intactId="EBI-724458">
        <id>Q9NQ34</id>
        <label>TMEM9B</label>
    </interactant>
    <organismsDiffer>false</organismsDiffer>
    <experiments>3</experiments>
</comment>
<comment type="interaction">
    <interactant intactId="EBI-744771">
        <id>O75344</id>
    </interactant>
    <interactant intactId="EBI-625509">
        <id>Q8N720</id>
        <label>ZNF655</label>
    </interactant>
    <organismsDiffer>false</organismsDiffer>
    <experiments>3</experiments>
</comment>
<comment type="interaction">
    <interactant intactId="EBI-744771">
        <id>O75344</id>
    </interactant>
    <interactant intactId="EBI-9359023">
        <id>Q3UJD6-2</id>
        <label>Usp19</label>
    </interactant>
    <organismsDiffer>true</organismsDiffer>
    <experiments>2</experiments>
</comment>
<comment type="interaction">
    <interactant intactId="EBI-744771">
        <id>O75344</id>
    </interactant>
    <interactant intactId="EBI-6863748">
        <id>PRO_0000037551</id>
        <dbReference type="UniProtKB" id="Q9WMX2"/>
    </interactant>
    <organismsDiffer>true</organismsDiffer>
    <experiments>6</experiments>
</comment>
<comment type="subcellular location">
    <subcellularLocation>
        <location evidence="9">Cytoplasm</location>
    </subcellularLocation>
    <subcellularLocation>
        <location evidence="9">Nucleus</location>
    </subcellularLocation>
    <text evidence="9">In spermatocytes, it colocalizes with PIWIL1 in large cytoplasmic granules (PubMed:36150389). Does not localize to the synaptonemal complex (PubMed:36150389).</text>
</comment>
<comment type="alternative products">
    <event type="alternative splicing"/>
    <isoform>
        <id>O75344-1</id>
        <name>1</name>
        <sequence type="displayed"/>
    </isoform>
    <isoform>
        <id>O75344-2</id>
        <name>2</name>
        <sequence type="described" ref="VSP_042038"/>
    </isoform>
    <isoform>
        <id>O75344-3</id>
        <name>3</name>
        <sequence type="described" ref="VSP_054251"/>
    </isoform>
</comment>
<comment type="tissue specificity">
    <text>Detected in all tissues examined, with higher expression in testis, heart, skeletal muscle, liver, and kidney.</text>
</comment>
<comment type="disease">
    <text evidence="4 10">FKBP6 is located in the Williams-Beuren syndrome (WBS) critical region. WBS results from a hemizygous deletion of several genes on chromosome 7q11.23, thought to arise as a consequence of unequal crossing over between highly homologous low-copy repeat sequences flanking the deleted region. Haploinsufficiency of FKBP6 may be the cause of certain cardiovascular and musculo-skeletal abnormalities observed in the disease (PubMed:9782077). A father and son with Williams-Beuren syndrome appear to have a common heterozygous deletion that includes FKBP6 gene. However, the haploinsufficiency for FKBP6 does not appear to preclude male fertility (PubMed:15770126).</text>
</comment>
<comment type="disease" evidence="6 9">
    <disease id="DI-06530">
        <name>Spermatogenic failure 77</name>
        <acronym>SPGF77</acronym>
        <description>An autosomal recessive male infertility disorder characterized by oligozoospermia or azoospermia, and abnormally shaped spermatozoa in the semen of affected individuals. Sperm abnormalities include double and triple tails, with amorphous or fragmented and enlarged heads, as well as pinhead sperm. Testicular tissue shows arrest at the round spermatid stage.</description>
        <dbReference type="MIM" id="620103"/>
    </disease>
    <text>The disease is caused by variants affecting the gene represented in this entry.</text>
</comment>
<comment type="similarity">
    <text evidence="13">Belongs to the FKBP6 family.</text>
</comment>
<comment type="caution">
    <text evidence="13">Although it contains a PPIase FKBP-type domain, does not show peptidyl-prolyl cis-trans isomerase activity.</text>
</comment>
<protein>
    <recommendedName>
        <fullName>Inactive peptidyl-prolyl cis-trans isomerase FKBP6</fullName>
        <shortName>Inactive PPIase FKBP6</shortName>
    </recommendedName>
    <alternativeName>
        <fullName>36 kDa FK506-binding protein</fullName>
        <shortName>36 kDa FKBP</shortName>
        <shortName>FKBP-36</shortName>
    </alternativeName>
    <alternativeName>
        <fullName>FK506-binding protein 6</fullName>
        <shortName>FKBP-6</shortName>
    </alternativeName>
    <alternativeName>
        <fullName>Immunophilin FKBP36</fullName>
    </alternativeName>
</protein>
<organism>
    <name type="scientific">Homo sapiens</name>
    <name type="common">Human</name>
    <dbReference type="NCBI Taxonomy" id="9606"/>
    <lineage>
        <taxon>Eukaryota</taxon>
        <taxon>Metazoa</taxon>
        <taxon>Chordata</taxon>
        <taxon>Craniata</taxon>
        <taxon>Vertebrata</taxon>
        <taxon>Euteleostomi</taxon>
        <taxon>Mammalia</taxon>
        <taxon>Eutheria</taxon>
        <taxon>Euarchontoglires</taxon>
        <taxon>Primates</taxon>
        <taxon>Haplorrhini</taxon>
        <taxon>Catarrhini</taxon>
        <taxon>Hominidae</taxon>
        <taxon>Homo</taxon>
    </lineage>
</organism>
<feature type="chain" id="PRO_0000075329" description="Inactive peptidyl-prolyl cis-trans isomerase FKBP6">
    <location>
        <begin position="1"/>
        <end position="327"/>
    </location>
</feature>
<feature type="domain" description="PPIase FKBP-type" evidence="3">
    <location>
        <begin position="54"/>
        <end position="143"/>
    </location>
</feature>
<feature type="repeat" description="TPR 1">
    <location>
        <begin position="171"/>
        <end position="204"/>
    </location>
</feature>
<feature type="repeat" description="TPR 2">
    <location>
        <begin position="219"/>
        <end position="252"/>
    </location>
</feature>
<feature type="repeat" description="TPR 3">
    <location>
        <begin position="253"/>
        <end position="286"/>
    </location>
</feature>
<feature type="splice variant" id="VSP_042038" description="In isoform 2." evidence="11">
    <original>MGGSALNQGVLEGDDAPGQ</original>
    <variation>MSASSWPQNGMPPS</variation>
    <location>
        <begin position="1"/>
        <end position="19"/>
    </location>
</feature>
<feature type="splice variant" id="VSP_054251" description="In isoform 3." evidence="12">
    <location>
        <begin position="59"/>
        <end position="88"/>
    </location>
</feature>
<feature type="sequence variant" id="VAR_070840" description="In dbSNP:rs147213094." evidence="5">
    <original>R</original>
    <variation>C</variation>
    <location>
        <position position="183"/>
    </location>
</feature>
<feature type="sequence variant" id="VAR_087742" description="In SPGF77." evidence="9">
    <location>
        <begin position="204"/>
        <end position="327"/>
    </location>
</feature>
<feature type="sequence variant" id="VAR_087743" description="In SPGF77." evidence="9">
    <location>
        <begin position="278"/>
        <end position="327"/>
    </location>
</feature>
<feature type="sequence conflict" description="In Ref. 2; AAP97324." evidence="13" ref="2">
    <original>R</original>
    <variation>Q</variation>
    <location>
        <position position="103"/>
    </location>
</feature>
<feature type="sequence conflict" description="In Ref. 2; AAP97324." evidence="13" ref="2">
    <original>C</original>
    <variation>S</variation>
    <location>
        <position position="123"/>
    </location>
</feature>
<feature type="sequence conflict" description="In Ref. 2; AAP97324." evidence="13" ref="2">
    <original>E</original>
    <variation>K</variation>
    <location>
        <position position="136"/>
    </location>
</feature>
<feature type="helix" evidence="14">
    <location>
        <begin position="21"/>
        <end position="25"/>
    </location>
</feature>
<feature type="turn" evidence="14">
    <location>
        <begin position="26"/>
        <end position="28"/>
    </location>
</feature>
<feature type="strand" evidence="14">
    <location>
        <begin position="30"/>
        <end position="44"/>
    </location>
</feature>
<feature type="strand" evidence="14">
    <location>
        <begin position="47"/>
        <end position="50"/>
    </location>
</feature>
<feature type="strand" evidence="14">
    <location>
        <begin position="56"/>
        <end position="64"/>
    </location>
</feature>
<feature type="strand" evidence="14">
    <location>
        <begin position="72"/>
        <end position="74"/>
    </location>
</feature>
<feature type="helix" evidence="14">
    <location>
        <begin position="93"/>
        <end position="100"/>
    </location>
</feature>
<feature type="strand" evidence="14">
    <location>
        <begin position="107"/>
        <end position="112"/>
    </location>
</feature>
<feature type="helix" evidence="14">
    <location>
        <begin position="114"/>
        <end position="116"/>
    </location>
</feature>
<feature type="turn" evidence="14">
    <location>
        <begin position="117"/>
        <end position="121"/>
    </location>
</feature>
<feature type="turn" evidence="14">
    <location>
        <begin position="124"/>
        <end position="126"/>
    </location>
</feature>
<feature type="strand" evidence="14">
    <location>
        <begin position="133"/>
        <end position="143"/>
    </location>
</feature>
<proteinExistence type="evidence at protein level"/>
<accession>O75344</accession>
<accession>B4DXT7</accession>
<accession>G3V0I2</accession>
<accession>Q7Z4T4</accession>
<accession>Q9UDS0</accession>